<accession>Q1QAY1</accession>
<feature type="chain" id="PRO_0000340628" description="Sulfate adenylyltransferase">
    <location>
        <begin position="1"/>
        <end position="417"/>
    </location>
</feature>
<evidence type="ECO:0000255" key="1">
    <source>
        <dbReference type="HAMAP-Rule" id="MF_00066"/>
    </source>
</evidence>
<keyword id="KW-0067">ATP-binding</keyword>
<keyword id="KW-0547">Nucleotide-binding</keyword>
<keyword id="KW-0548">Nucleotidyltransferase</keyword>
<keyword id="KW-0808">Transferase</keyword>
<proteinExistence type="inferred from homology"/>
<reference key="1">
    <citation type="submission" date="2006-03" db="EMBL/GenBank/DDBJ databases">
        <title>Complete sequence of chromosome of Psychrobacter cryohalolentis K5.</title>
        <authorList>
            <consortium name="US DOE Joint Genome Institute"/>
            <person name="Copeland A."/>
            <person name="Lucas S."/>
            <person name="Lapidus A."/>
            <person name="Barry K."/>
            <person name="Detter J.C."/>
            <person name="Glavina T."/>
            <person name="Hammon N."/>
            <person name="Israni S."/>
            <person name="Dalin E."/>
            <person name="Tice H."/>
            <person name="Pitluck S."/>
            <person name="Brettin T."/>
            <person name="Bruce D."/>
            <person name="Han C."/>
            <person name="Tapia R."/>
            <person name="Sims D.R."/>
            <person name="Gilna P."/>
            <person name="Schmutz J."/>
            <person name="Larimer F."/>
            <person name="Land M."/>
            <person name="Hauser L."/>
            <person name="Kyrpides N."/>
            <person name="Kim E."/>
            <person name="Richardson P."/>
        </authorList>
    </citation>
    <scope>NUCLEOTIDE SEQUENCE [LARGE SCALE GENOMIC DNA]</scope>
    <source>
        <strain>ATCC BAA-1226 / DSM 17306 / VKM B-2378 / K5</strain>
    </source>
</reference>
<organism>
    <name type="scientific">Psychrobacter cryohalolentis (strain ATCC BAA-1226 / DSM 17306 / VKM B-2378 / K5)</name>
    <dbReference type="NCBI Taxonomy" id="335284"/>
    <lineage>
        <taxon>Bacteria</taxon>
        <taxon>Pseudomonadati</taxon>
        <taxon>Pseudomonadota</taxon>
        <taxon>Gammaproteobacteria</taxon>
        <taxon>Moraxellales</taxon>
        <taxon>Moraxellaceae</taxon>
        <taxon>Psychrobacter</taxon>
    </lineage>
</organism>
<sequence>MTSITHDQRPSKLVPPHGSAELKPLLLNGEARNQALKLASTLPAITLSSRERGDLIMFGIGGFTPLNGFMNQADWQGVVDNMRLQSGDNAGLFWPIPITLSAPKATADSLNQGDKVALVAQDGEIMGILTVEETYTIDKEHECQQVFTTTDPEHPGVQQVLEQGEVNIAGSVEVLSEGEFPTLYPEIYKTPAETRAILDNKGWQTVAAFQTRNPMHRSHEYLAKIAIEICDGVLIHSLLGALKPGDIPADVRQEAIKTLIDNYFRADTVIQAGYPLDMRYAGPREALLHAVFRQNYGCSHLIVGRDHAGVGDYYGAFDAQTIFDHVGKDDLITQPLKIGWTFWCNACNAMASDKTCPHEASEHVKVSGTKLRKALSEDLDVPENFSRPEVLQILRDYYAGIAFDERAEVKLVGASAV</sequence>
<comment type="catalytic activity">
    <reaction evidence="1">
        <text>sulfate + ATP + H(+) = adenosine 5'-phosphosulfate + diphosphate</text>
        <dbReference type="Rhea" id="RHEA:18133"/>
        <dbReference type="ChEBI" id="CHEBI:15378"/>
        <dbReference type="ChEBI" id="CHEBI:16189"/>
        <dbReference type="ChEBI" id="CHEBI:30616"/>
        <dbReference type="ChEBI" id="CHEBI:33019"/>
        <dbReference type="ChEBI" id="CHEBI:58243"/>
        <dbReference type="EC" id="2.7.7.4"/>
    </reaction>
</comment>
<comment type="pathway">
    <text evidence="1">Sulfur metabolism; hydrogen sulfide biosynthesis; sulfite from sulfate: step 1/3.</text>
</comment>
<comment type="similarity">
    <text evidence="1">Belongs to the sulfate adenylyltransferase family.</text>
</comment>
<name>SAT_PSYCK</name>
<dbReference type="EC" id="2.7.7.4" evidence="1"/>
<dbReference type="EMBL" id="CP000323">
    <property type="protein sequence ID" value="ABE75172.1"/>
    <property type="molecule type" value="Genomic_DNA"/>
</dbReference>
<dbReference type="RefSeq" id="WP_011513724.1">
    <property type="nucleotide sequence ID" value="NC_007969.1"/>
</dbReference>
<dbReference type="SMR" id="Q1QAY1"/>
<dbReference type="STRING" id="335284.Pcryo_1393"/>
<dbReference type="KEGG" id="pcr:Pcryo_1393"/>
<dbReference type="eggNOG" id="COG2046">
    <property type="taxonomic scope" value="Bacteria"/>
</dbReference>
<dbReference type="HOGENOM" id="CLU_022950_1_1_6"/>
<dbReference type="UniPathway" id="UPA00140">
    <property type="reaction ID" value="UER00204"/>
</dbReference>
<dbReference type="Proteomes" id="UP000002425">
    <property type="component" value="Chromosome"/>
</dbReference>
<dbReference type="GO" id="GO:0005524">
    <property type="term" value="F:ATP binding"/>
    <property type="evidence" value="ECO:0007669"/>
    <property type="project" value="UniProtKB-KW"/>
</dbReference>
<dbReference type="GO" id="GO:0004781">
    <property type="term" value="F:sulfate adenylyltransferase (ATP) activity"/>
    <property type="evidence" value="ECO:0007669"/>
    <property type="project" value="UniProtKB-UniRule"/>
</dbReference>
<dbReference type="GO" id="GO:0070814">
    <property type="term" value="P:hydrogen sulfide biosynthetic process"/>
    <property type="evidence" value="ECO:0007669"/>
    <property type="project" value="UniProtKB-UniRule"/>
</dbReference>
<dbReference type="GO" id="GO:0000103">
    <property type="term" value="P:sulfate assimilation"/>
    <property type="evidence" value="ECO:0007669"/>
    <property type="project" value="UniProtKB-UniRule"/>
</dbReference>
<dbReference type="CDD" id="cd00517">
    <property type="entry name" value="ATPS"/>
    <property type="match status" value="1"/>
</dbReference>
<dbReference type="Gene3D" id="3.40.50.620">
    <property type="entry name" value="HUPs"/>
    <property type="match status" value="1"/>
</dbReference>
<dbReference type="Gene3D" id="3.10.400.10">
    <property type="entry name" value="Sulfate adenylyltransferase"/>
    <property type="match status" value="1"/>
</dbReference>
<dbReference type="HAMAP" id="MF_00066">
    <property type="entry name" value="Sulf_adenylyltr"/>
    <property type="match status" value="1"/>
</dbReference>
<dbReference type="InterPro" id="IPR025980">
    <property type="entry name" value="ATP-Sase_PUA-like_dom"/>
</dbReference>
<dbReference type="InterPro" id="IPR015947">
    <property type="entry name" value="PUA-like_sf"/>
</dbReference>
<dbReference type="InterPro" id="IPR014729">
    <property type="entry name" value="Rossmann-like_a/b/a_fold"/>
</dbReference>
<dbReference type="InterPro" id="IPR020792">
    <property type="entry name" value="SO4_adenylyltransferase_pro"/>
</dbReference>
<dbReference type="InterPro" id="IPR024951">
    <property type="entry name" value="Sulfurylase_cat_dom"/>
</dbReference>
<dbReference type="InterPro" id="IPR002650">
    <property type="entry name" value="Sulphate_adenylyltransferase"/>
</dbReference>
<dbReference type="NCBIfam" id="NF003166">
    <property type="entry name" value="PRK04149.1"/>
    <property type="match status" value="1"/>
</dbReference>
<dbReference type="NCBIfam" id="TIGR00339">
    <property type="entry name" value="sopT"/>
    <property type="match status" value="1"/>
</dbReference>
<dbReference type="PANTHER" id="PTHR43509">
    <property type="match status" value="1"/>
</dbReference>
<dbReference type="PANTHER" id="PTHR43509:SF1">
    <property type="entry name" value="SULFATE ADENYLYLTRANSFERASE"/>
    <property type="match status" value="1"/>
</dbReference>
<dbReference type="Pfam" id="PF01747">
    <property type="entry name" value="ATP-sulfurylase"/>
    <property type="match status" value="1"/>
</dbReference>
<dbReference type="Pfam" id="PF14306">
    <property type="entry name" value="PUA_2"/>
    <property type="match status" value="1"/>
</dbReference>
<dbReference type="SUPFAM" id="SSF52374">
    <property type="entry name" value="Nucleotidylyl transferase"/>
    <property type="match status" value="1"/>
</dbReference>
<dbReference type="SUPFAM" id="SSF88697">
    <property type="entry name" value="PUA domain-like"/>
    <property type="match status" value="1"/>
</dbReference>
<gene>
    <name evidence="1" type="primary">sat</name>
    <name type="ordered locus">Pcryo_1393</name>
</gene>
<protein>
    <recommendedName>
        <fullName evidence="1">Sulfate adenylyltransferase</fullName>
        <ecNumber evidence="1">2.7.7.4</ecNumber>
    </recommendedName>
    <alternativeName>
        <fullName evidence="1">ATP-sulfurylase</fullName>
    </alternativeName>
    <alternativeName>
        <fullName evidence="1">Sulfate adenylate transferase</fullName>
        <shortName evidence="1">SAT</shortName>
    </alternativeName>
</protein>